<comment type="function">
    <text>Light-harvesting photosynthetic bile pigment-protein from the phycobiliprotein complex.</text>
</comment>
<comment type="subunit">
    <text>Heterodimer of an alpha and a beta chain.</text>
</comment>
<comment type="subcellular location">
    <subcellularLocation>
        <location evidence="1">Cellular thylakoid membrane</location>
        <topology evidence="1">Peripheral membrane protein</topology>
        <orientation evidence="1">Cytoplasmic side</orientation>
    </subcellularLocation>
    <text evidence="1">Forms the periphery of the phycobilisome rod.</text>
</comment>
<comment type="PTM">
    <text evidence="1">Contains one covalently linked bilin chromophore.</text>
</comment>
<comment type="similarity">
    <text evidence="2">Belongs to the phycobiliprotein family.</text>
</comment>
<protein>
    <recommendedName>
        <fullName>C-phycoerythrin class 1 subunit alpha</fullName>
    </recommendedName>
    <alternativeName>
        <fullName>C-phycoerythrin class I alpha chain</fullName>
    </alternativeName>
</protein>
<organism>
    <name type="scientific">Synechococcus sp. (strain WH7803)</name>
    <dbReference type="NCBI Taxonomy" id="32051"/>
    <lineage>
        <taxon>Bacteria</taxon>
        <taxon>Bacillati</taxon>
        <taxon>Cyanobacteriota</taxon>
        <taxon>Cyanophyceae</taxon>
        <taxon>Synechococcales</taxon>
        <taxon>Synechococcaceae</taxon>
        <taxon>Synechococcus</taxon>
    </lineage>
</organism>
<keyword id="KW-0042">Antenna complex</keyword>
<keyword id="KW-0089">Bile pigment</keyword>
<keyword id="KW-0157">Chromophore</keyword>
<keyword id="KW-0249">Electron transport</keyword>
<keyword id="KW-0472">Membrane</keyword>
<keyword id="KW-0602">Photosynthesis</keyword>
<keyword id="KW-0605">Phycobilisome</keyword>
<keyword id="KW-1185">Reference proteome</keyword>
<keyword id="KW-0793">Thylakoid</keyword>
<keyword id="KW-0813">Transport</keyword>
<gene>
    <name type="primary">cpeA</name>
    <name type="ordered locus">SynWH7803_0486</name>
</gene>
<proteinExistence type="inferred from homology"/>
<feature type="chain" id="PRO_0000199184" description="C-phycoerythrin class 1 subunit alpha">
    <location>
        <begin position="1"/>
        <end position="164"/>
    </location>
</feature>
<feature type="binding site" description="covalent" evidence="1">
    <location>
        <position position="82"/>
    </location>
    <ligand>
        <name>(2R,3E)-phycoerythrobilin</name>
        <dbReference type="ChEBI" id="CHEBI:85276"/>
        <label>1</label>
    </ligand>
</feature>
<feature type="binding site" description="covalent" evidence="1">
    <location>
        <position position="139"/>
    </location>
    <ligand>
        <name>(2R,3E)-phycoerythrobilin</name>
        <dbReference type="ChEBI" id="CHEBI:85276"/>
        <label>2</label>
    </ligand>
</feature>
<feature type="sequence conflict" description="In Ref. 1; CAA51465." evidence="2" ref="1">
    <original>TA</original>
    <variation>SG</variation>
    <location>
        <begin position="10"/>
        <end position="11"/>
    </location>
</feature>
<feature type="sequence conflict" description="In Ref. 1; CAA51465." evidence="2" ref="1">
    <original>A</original>
    <variation>R</variation>
    <location>
        <position position="34"/>
    </location>
</feature>
<dbReference type="EMBL" id="X72961">
    <property type="protein sequence ID" value="CAA51465.1"/>
    <property type="molecule type" value="Genomic_DNA"/>
</dbReference>
<dbReference type="EMBL" id="CT971583">
    <property type="protein sequence ID" value="CAK22912.1"/>
    <property type="molecule type" value="Genomic_DNA"/>
</dbReference>
<dbReference type="SMR" id="Q08086"/>
<dbReference type="STRING" id="32051.SynWH7803_0486"/>
<dbReference type="KEGG" id="syx:SynWH7803_0486"/>
<dbReference type="eggNOG" id="ENOG502Z8AX">
    <property type="taxonomic scope" value="Bacteria"/>
</dbReference>
<dbReference type="HOGENOM" id="CLU_104219_2_0_3"/>
<dbReference type="OrthoDB" id="466183at2"/>
<dbReference type="Proteomes" id="UP000001566">
    <property type="component" value="Chromosome"/>
</dbReference>
<dbReference type="GO" id="GO:0030089">
    <property type="term" value="C:phycobilisome"/>
    <property type="evidence" value="ECO:0007669"/>
    <property type="project" value="UniProtKB-KW"/>
</dbReference>
<dbReference type="GO" id="GO:0031676">
    <property type="term" value="C:plasma membrane-derived thylakoid membrane"/>
    <property type="evidence" value="ECO:0007669"/>
    <property type="project" value="UniProtKB-SubCell"/>
</dbReference>
<dbReference type="GO" id="GO:0015979">
    <property type="term" value="P:photosynthesis"/>
    <property type="evidence" value="ECO:0007669"/>
    <property type="project" value="UniProtKB-KW"/>
</dbReference>
<dbReference type="CDD" id="cd14769">
    <property type="entry name" value="PE_alpha"/>
    <property type="match status" value="1"/>
</dbReference>
<dbReference type="Gene3D" id="1.10.490.20">
    <property type="entry name" value="Phycocyanins"/>
    <property type="match status" value="1"/>
</dbReference>
<dbReference type="InterPro" id="IPR009050">
    <property type="entry name" value="Globin-like_sf"/>
</dbReference>
<dbReference type="InterPro" id="IPR012128">
    <property type="entry name" value="Phycobilisome_asu/bsu"/>
</dbReference>
<dbReference type="InterPro" id="IPR038719">
    <property type="entry name" value="Phycobilisome_asu/bsu_sf"/>
</dbReference>
<dbReference type="PANTHER" id="PTHR34011:SF4">
    <property type="entry name" value="C-PHYCOCYANIN ALPHA SUBUNIT"/>
    <property type="match status" value="1"/>
</dbReference>
<dbReference type="PANTHER" id="PTHR34011">
    <property type="entry name" value="PHYCOBILISOME 32.1 KDA LINKER POLYPEPTIDE, PHYCOCYANIN-ASSOCIATED, ROD 2-RELATED"/>
    <property type="match status" value="1"/>
</dbReference>
<dbReference type="Pfam" id="PF00502">
    <property type="entry name" value="Phycobilisome"/>
    <property type="match status" value="1"/>
</dbReference>
<dbReference type="PIRSF" id="PIRSF000081">
    <property type="entry name" value="Phycocyanin"/>
    <property type="match status" value="1"/>
</dbReference>
<dbReference type="SUPFAM" id="SSF46458">
    <property type="entry name" value="Globin-like"/>
    <property type="match status" value="1"/>
</dbReference>
<sequence>MKSVVTTVVTAADAAGRFPSQNDLEAVQGNIQRAAARLEAAEKLAAGLDAVTKEAGDACFNKYPYLKQPGEAGENQTKVDKCYRDLGHYLRLINYCLVVGGTGPLDEWGIAGAREVYRTLGLPTGPYVEALTYTRDRACAPRDMSPQALNEFKSYLDYVINALS</sequence>
<accession>Q08086</accession>
<accession>A5GIZ7</accession>
<evidence type="ECO:0000250" key="1"/>
<evidence type="ECO:0000305" key="2"/>
<name>PHEA1_SYNPW</name>
<reference key="1">
    <citation type="journal article" date="1994" name="Plant Mol. Biol.">
        <title>Organization and transcription of the class I phycoerythrin genes of the marine cyanobacterium Synechococcus sp. WH7803.</title>
        <authorList>
            <person name="Newman J."/>
            <person name="Mann N.H."/>
            <person name="Carr N.G."/>
        </authorList>
    </citation>
    <scope>NUCLEOTIDE SEQUENCE [GENOMIC DNA]</scope>
</reference>
<reference key="2">
    <citation type="submission" date="2006-05" db="EMBL/GenBank/DDBJ databases">
        <authorList>
            <consortium name="Genoscope"/>
        </authorList>
    </citation>
    <scope>NUCLEOTIDE SEQUENCE [LARGE SCALE GENOMIC DNA]</scope>
    <source>
        <strain>WH7803</strain>
    </source>
</reference>